<organism>
    <name type="scientific">Salmonella typhi</name>
    <dbReference type="NCBI Taxonomy" id="90370"/>
    <lineage>
        <taxon>Bacteria</taxon>
        <taxon>Pseudomonadati</taxon>
        <taxon>Pseudomonadota</taxon>
        <taxon>Gammaproteobacteria</taxon>
        <taxon>Enterobacterales</taxon>
        <taxon>Enterobacteriaceae</taxon>
        <taxon>Salmonella</taxon>
    </lineage>
</organism>
<evidence type="ECO:0000255" key="1">
    <source>
        <dbReference type="HAMAP-Rule" id="MF_01815"/>
    </source>
</evidence>
<keyword id="KW-0012">Acyltransferase</keyword>
<keyword id="KW-0963">Cytoplasm</keyword>
<keyword id="KW-0275">Fatty acid biosynthesis</keyword>
<keyword id="KW-0276">Fatty acid metabolism</keyword>
<keyword id="KW-0444">Lipid biosynthesis</keyword>
<keyword id="KW-0443">Lipid metabolism</keyword>
<keyword id="KW-0511">Multifunctional enzyme</keyword>
<keyword id="KW-0808">Transferase</keyword>
<name>FABH_SALTI</name>
<gene>
    <name evidence="1" type="primary">fabH</name>
    <name type="ordered locus">STY1232</name>
    <name type="ordered locus">t1727</name>
</gene>
<reference key="1">
    <citation type="journal article" date="2001" name="Nature">
        <title>Complete genome sequence of a multiple drug resistant Salmonella enterica serovar Typhi CT18.</title>
        <authorList>
            <person name="Parkhill J."/>
            <person name="Dougan G."/>
            <person name="James K.D."/>
            <person name="Thomson N.R."/>
            <person name="Pickard D."/>
            <person name="Wain J."/>
            <person name="Churcher C.M."/>
            <person name="Mungall K.L."/>
            <person name="Bentley S.D."/>
            <person name="Holden M.T.G."/>
            <person name="Sebaihia M."/>
            <person name="Baker S."/>
            <person name="Basham D."/>
            <person name="Brooks K."/>
            <person name="Chillingworth T."/>
            <person name="Connerton P."/>
            <person name="Cronin A."/>
            <person name="Davis P."/>
            <person name="Davies R.M."/>
            <person name="Dowd L."/>
            <person name="White N."/>
            <person name="Farrar J."/>
            <person name="Feltwell T."/>
            <person name="Hamlin N."/>
            <person name="Haque A."/>
            <person name="Hien T.T."/>
            <person name="Holroyd S."/>
            <person name="Jagels K."/>
            <person name="Krogh A."/>
            <person name="Larsen T.S."/>
            <person name="Leather S."/>
            <person name="Moule S."/>
            <person name="O'Gaora P."/>
            <person name="Parry C."/>
            <person name="Quail M.A."/>
            <person name="Rutherford K.M."/>
            <person name="Simmonds M."/>
            <person name="Skelton J."/>
            <person name="Stevens K."/>
            <person name="Whitehead S."/>
            <person name="Barrell B.G."/>
        </authorList>
    </citation>
    <scope>NUCLEOTIDE SEQUENCE [LARGE SCALE GENOMIC DNA]</scope>
    <source>
        <strain>CT18</strain>
    </source>
</reference>
<reference key="2">
    <citation type="journal article" date="2003" name="J. Bacteriol.">
        <title>Comparative genomics of Salmonella enterica serovar Typhi strains Ty2 and CT18.</title>
        <authorList>
            <person name="Deng W."/>
            <person name="Liou S.-R."/>
            <person name="Plunkett G. III"/>
            <person name="Mayhew G.F."/>
            <person name="Rose D.J."/>
            <person name="Burland V."/>
            <person name="Kodoyianni V."/>
            <person name="Schwartz D.C."/>
            <person name="Blattner F.R."/>
        </authorList>
    </citation>
    <scope>NUCLEOTIDE SEQUENCE [LARGE SCALE GENOMIC DNA]</scope>
    <source>
        <strain>ATCC 700931 / Ty2</strain>
    </source>
</reference>
<protein>
    <recommendedName>
        <fullName evidence="1">Beta-ketoacyl-[acyl-carrier-protein] synthase III</fullName>
        <shortName evidence="1">Beta-ketoacyl-ACP synthase III</shortName>
        <shortName evidence="1">KAS III</shortName>
        <ecNumber evidence="1">2.3.1.180</ecNumber>
    </recommendedName>
    <alternativeName>
        <fullName evidence="1">3-oxoacyl-[acyl-carrier-protein] synthase 3</fullName>
    </alternativeName>
    <alternativeName>
        <fullName evidence="1">3-oxoacyl-[acyl-carrier-protein] synthase III</fullName>
    </alternativeName>
</protein>
<accession>Q8Z7J6</accession>
<proteinExistence type="inferred from homology"/>
<sequence>MYTKIIGTGSYLPEQVRTNADLEKMVETSDEWIVTRTGIRERHIAAPNETVATMGFTAANRAIEMAGIDKDQIGLIVVATTSATHAFPSAACQIQSMLGIKGCPAFDVAAACAGFTYALSIADQYVKSGVVKHALVVGSDVLARTCDPGDRGTIIIFGDGAGAAVLSASEEPGIISTHLHADGRYGELLTLPNADRVNPDNPIYLTMAGNEVFKVAVTELAHIVDETLAANNLDRSELDWLVPHQANLRIISATAKKLGMSMDNVVVTLDRHGNTSAASVPCALDEAVRDGRIKAGQLVLLEAFGGGFTWGSALIRF</sequence>
<comment type="function">
    <text evidence="1">Catalyzes the condensation reaction of fatty acid synthesis by the addition to an acyl acceptor of two carbons from malonyl-ACP. Catalyzes the first condensation reaction which initiates fatty acid synthesis and may therefore play a role in governing the total rate of fatty acid production. Possesses both acetoacetyl-ACP synthase and acetyl transacylase activities. Its substrate specificity determines the biosynthesis of branched-chain and/or straight-chain of fatty acids.</text>
</comment>
<comment type="catalytic activity">
    <reaction evidence="1">
        <text>malonyl-[ACP] + acetyl-CoA + H(+) = 3-oxobutanoyl-[ACP] + CO2 + CoA</text>
        <dbReference type="Rhea" id="RHEA:12080"/>
        <dbReference type="Rhea" id="RHEA-COMP:9623"/>
        <dbReference type="Rhea" id="RHEA-COMP:9625"/>
        <dbReference type="ChEBI" id="CHEBI:15378"/>
        <dbReference type="ChEBI" id="CHEBI:16526"/>
        <dbReference type="ChEBI" id="CHEBI:57287"/>
        <dbReference type="ChEBI" id="CHEBI:57288"/>
        <dbReference type="ChEBI" id="CHEBI:78449"/>
        <dbReference type="ChEBI" id="CHEBI:78450"/>
        <dbReference type="EC" id="2.3.1.180"/>
    </reaction>
</comment>
<comment type="pathway">
    <text evidence="1">Lipid metabolism; fatty acid biosynthesis.</text>
</comment>
<comment type="subunit">
    <text evidence="1">Homodimer.</text>
</comment>
<comment type="subcellular location">
    <subcellularLocation>
        <location evidence="1">Cytoplasm</location>
    </subcellularLocation>
</comment>
<comment type="domain">
    <text evidence="1">The last Arg residue of the ACP-binding site is essential for the weak association between ACP/AcpP and FabH.</text>
</comment>
<comment type="similarity">
    <text evidence="1">Belongs to the thiolase-like superfamily. FabH family.</text>
</comment>
<dbReference type="EC" id="2.3.1.180" evidence="1"/>
<dbReference type="EMBL" id="AL513382">
    <property type="protein sequence ID" value="CAD08317.1"/>
    <property type="molecule type" value="Genomic_DNA"/>
</dbReference>
<dbReference type="EMBL" id="AE014613">
    <property type="protein sequence ID" value="AAO69351.1"/>
    <property type="molecule type" value="Genomic_DNA"/>
</dbReference>
<dbReference type="RefSeq" id="NP_455686.1">
    <property type="nucleotide sequence ID" value="NC_003198.1"/>
</dbReference>
<dbReference type="RefSeq" id="WP_000288151.1">
    <property type="nucleotide sequence ID" value="NZ_WSUR01000030.1"/>
</dbReference>
<dbReference type="SMR" id="Q8Z7J6"/>
<dbReference type="STRING" id="220341.gene:17585197"/>
<dbReference type="KEGG" id="stt:t1727"/>
<dbReference type="KEGG" id="sty:STY1232"/>
<dbReference type="PATRIC" id="fig|220341.7.peg.1234"/>
<dbReference type="eggNOG" id="COG0332">
    <property type="taxonomic scope" value="Bacteria"/>
</dbReference>
<dbReference type="HOGENOM" id="CLU_039592_4_1_6"/>
<dbReference type="OMA" id="WGSEGDK"/>
<dbReference type="OrthoDB" id="9815506at2"/>
<dbReference type="UniPathway" id="UPA00094"/>
<dbReference type="Proteomes" id="UP000000541">
    <property type="component" value="Chromosome"/>
</dbReference>
<dbReference type="Proteomes" id="UP000002670">
    <property type="component" value="Chromosome"/>
</dbReference>
<dbReference type="GO" id="GO:0005737">
    <property type="term" value="C:cytoplasm"/>
    <property type="evidence" value="ECO:0007669"/>
    <property type="project" value="UniProtKB-SubCell"/>
</dbReference>
<dbReference type="GO" id="GO:0004315">
    <property type="term" value="F:3-oxoacyl-[acyl-carrier-protein] synthase activity"/>
    <property type="evidence" value="ECO:0007669"/>
    <property type="project" value="InterPro"/>
</dbReference>
<dbReference type="GO" id="GO:0033818">
    <property type="term" value="F:beta-ketoacyl-acyl-carrier-protein synthase III activity"/>
    <property type="evidence" value="ECO:0007669"/>
    <property type="project" value="UniProtKB-UniRule"/>
</dbReference>
<dbReference type="GO" id="GO:0006633">
    <property type="term" value="P:fatty acid biosynthetic process"/>
    <property type="evidence" value="ECO:0007669"/>
    <property type="project" value="UniProtKB-UniRule"/>
</dbReference>
<dbReference type="CDD" id="cd00830">
    <property type="entry name" value="KAS_III"/>
    <property type="match status" value="1"/>
</dbReference>
<dbReference type="FunFam" id="3.40.47.10:FF:000004">
    <property type="entry name" value="3-oxoacyl-[acyl-carrier-protein] synthase 3"/>
    <property type="match status" value="1"/>
</dbReference>
<dbReference type="Gene3D" id="3.40.47.10">
    <property type="match status" value="1"/>
</dbReference>
<dbReference type="HAMAP" id="MF_01815">
    <property type="entry name" value="FabH"/>
    <property type="match status" value="1"/>
</dbReference>
<dbReference type="InterPro" id="IPR013747">
    <property type="entry name" value="ACP_syn_III_C"/>
</dbReference>
<dbReference type="InterPro" id="IPR013751">
    <property type="entry name" value="ACP_syn_III_N"/>
</dbReference>
<dbReference type="InterPro" id="IPR004655">
    <property type="entry name" value="FabH"/>
</dbReference>
<dbReference type="InterPro" id="IPR016039">
    <property type="entry name" value="Thiolase-like"/>
</dbReference>
<dbReference type="NCBIfam" id="TIGR00747">
    <property type="entry name" value="fabH"/>
    <property type="match status" value="1"/>
</dbReference>
<dbReference type="NCBIfam" id="NF006829">
    <property type="entry name" value="PRK09352.1"/>
    <property type="match status" value="1"/>
</dbReference>
<dbReference type="PANTHER" id="PTHR43091">
    <property type="entry name" value="3-OXOACYL-[ACYL-CARRIER-PROTEIN] SYNTHASE"/>
    <property type="match status" value="1"/>
</dbReference>
<dbReference type="PANTHER" id="PTHR43091:SF1">
    <property type="entry name" value="BETA-KETOACYL-[ACYL-CARRIER-PROTEIN] SYNTHASE III, CHLOROPLASTIC"/>
    <property type="match status" value="1"/>
</dbReference>
<dbReference type="Pfam" id="PF08545">
    <property type="entry name" value="ACP_syn_III"/>
    <property type="match status" value="1"/>
</dbReference>
<dbReference type="Pfam" id="PF08541">
    <property type="entry name" value="ACP_syn_III_C"/>
    <property type="match status" value="1"/>
</dbReference>
<dbReference type="SUPFAM" id="SSF53901">
    <property type="entry name" value="Thiolase-like"/>
    <property type="match status" value="1"/>
</dbReference>
<feature type="chain" id="PRO_0000110464" description="Beta-ketoacyl-[acyl-carrier-protein] synthase III">
    <location>
        <begin position="1"/>
        <end position="317"/>
    </location>
</feature>
<feature type="region of interest" description="ACP-binding" evidence="1">
    <location>
        <begin position="245"/>
        <end position="249"/>
    </location>
</feature>
<feature type="active site" evidence="1">
    <location>
        <position position="112"/>
    </location>
</feature>
<feature type="active site" evidence="1">
    <location>
        <position position="244"/>
    </location>
</feature>
<feature type="active site" evidence="1">
    <location>
        <position position="274"/>
    </location>
</feature>